<keyword id="KW-0963">Cytoplasm</keyword>
<keyword id="KW-0369">Histidine metabolism</keyword>
<keyword id="KW-0378">Hydrolase</keyword>
<keyword id="KW-0408">Iron</keyword>
<keyword id="KW-0479">Metal-binding</keyword>
<keyword id="KW-0862">Zinc</keyword>
<dbReference type="EC" id="3.5.2.7" evidence="1"/>
<dbReference type="EMBL" id="CP000139">
    <property type="protein sequence ID" value="ABR38056.1"/>
    <property type="molecule type" value="Genomic_DNA"/>
</dbReference>
<dbReference type="RefSeq" id="WP_011964713.1">
    <property type="nucleotide sequence ID" value="NZ_CAXUIZ010000092.1"/>
</dbReference>
<dbReference type="SMR" id="A6KX92"/>
<dbReference type="STRING" id="435590.BVU_0336"/>
<dbReference type="PaxDb" id="435590-BVU_0336"/>
<dbReference type="GeneID" id="5301305"/>
<dbReference type="KEGG" id="bvu:BVU_0336"/>
<dbReference type="eggNOG" id="COG1228">
    <property type="taxonomic scope" value="Bacteria"/>
</dbReference>
<dbReference type="HOGENOM" id="CLU_041647_0_1_10"/>
<dbReference type="BioCyc" id="BVUL435590:G1G59-354-MONOMER"/>
<dbReference type="UniPathway" id="UPA00379">
    <property type="reaction ID" value="UER00551"/>
</dbReference>
<dbReference type="Proteomes" id="UP000002861">
    <property type="component" value="Chromosome"/>
</dbReference>
<dbReference type="GO" id="GO:0005737">
    <property type="term" value="C:cytoplasm"/>
    <property type="evidence" value="ECO:0007669"/>
    <property type="project" value="UniProtKB-SubCell"/>
</dbReference>
<dbReference type="GO" id="GO:0050480">
    <property type="term" value="F:imidazolonepropionase activity"/>
    <property type="evidence" value="ECO:0007669"/>
    <property type="project" value="UniProtKB-UniRule"/>
</dbReference>
<dbReference type="GO" id="GO:0005506">
    <property type="term" value="F:iron ion binding"/>
    <property type="evidence" value="ECO:0007669"/>
    <property type="project" value="UniProtKB-UniRule"/>
</dbReference>
<dbReference type="GO" id="GO:0008270">
    <property type="term" value="F:zinc ion binding"/>
    <property type="evidence" value="ECO:0007669"/>
    <property type="project" value="UniProtKB-UniRule"/>
</dbReference>
<dbReference type="GO" id="GO:0019556">
    <property type="term" value="P:L-histidine catabolic process to glutamate and formamide"/>
    <property type="evidence" value="ECO:0007669"/>
    <property type="project" value="UniProtKB-UniPathway"/>
</dbReference>
<dbReference type="GO" id="GO:0019557">
    <property type="term" value="P:L-histidine catabolic process to glutamate and formate"/>
    <property type="evidence" value="ECO:0007669"/>
    <property type="project" value="UniProtKB-UniPathway"/>
</dbReference>
<dbReference type="CDD" id="cd01296">
    <property type="entry name" value="Imidazolone-5PH"/>
    <property type="match status" value="1"/>
</dbReference>
<dbReference type="FunFam" id="3.20.20.140:FF:000007">
    <property type="entry name" value="Imidazolonepropionase"/>
    <property type="match status" value="1"/>
</dbReference>
<dbReference type="Gene3D" id="3.20.20.140">
    <property type="entry name" value="Metal-dependent hydrolases"/>
    <property type="match status" value="1"/>
</dbReference>
<dbReference type="Gene3D" id="2.30.40.10">
    <property type="entry name" value="Urease, subunit C, domain 1"/>
    <property type="match status" value="1"/>
</dbReference>
<dbReference type="HAMAP" id="MF_00372">
    <property type="entry name" value="HutI"/>
    <property type="match status" value="1"/>
</dbReference>
<dbReference type="InterPro" id="IPR006680">
    <property type="entry name" value="Amidohydro-rel"/>
</dbReference>
<dbReference type="InterPro" id="IPR005920">
    <property type="entry name" value="HutI"/>
</dbReference>
<dbReference type="InterPro" id="IPR011059">
    <property type="entry name" value="Metal-dep_hydrolase_composite"/>
</dbReference>
<dbReference type="InterPro" id="IPR032466">
    <property type="entry name" value="Metal_Hydrolase"/>
</dbReference>
<dbReference type="NCBIfam" id="TIGR01224">
    <property type="entry name" value="hutI"/>
    <property type="match status" value="1"/>
</dbReference>
<dbReference type="PANTHER" id="PTHR42752">
    <property type="entry name" value="IMIDAZOLONEPROPIONASE"/>
    <property type="match status" value="1"/>
</dbReference>
<dbReference type="PANTHER" id="PTHR42752:SF1">
    <property type="entry name" value="IMIDAZOLONEPROPIONASE-RELATED"/>
    <property type="match status" value="1"/>
</dbReference>
<dbReference type="Pfam" id="PF01979">
    <property type="entry name" value="Amidohydro_1"/>
    <property type="match status" value="1"/>
</dbReference>
<dbReference type="SUPFAM" id="SSF51338">
    <property type="entry name" value="Composite domain of metallo-dependent hydrolases"/>
    <property type="match status" value="1"/>
</dbReference>
<dbReference type="SUPFAM" id="SSF51556">
    <property type="entry name" value="Metallo-dependent hydrolases"/>
    <property type="match status" value="1"/>
</dbReference>
<sequence>MSNNLIIINAHIVTPQGRTARKGEAMNELLNIPCGTVRVTDGIITYVGENRISHEKPGYKVLDARGNVLLPGFVDSHTHLVFGGFRPDEFIWRLNGDSYMSIMERGGGIINTVRATREASFEELKHKAEWFLDTMSRMGVTTVEGKSGYGLDRDTELKQLSIMQAINECPDRKVDIATTFLGAHALPEEYKGRSDAYIDFLINEMLPMIHQKQLAENCDIFCEKGVFTVEQSRKLLKAAQALGFGTKLHADEIVSFGGAELAGELKALSADHLLQASDEGIKALAQNNVVATLLPLTAFTLKEPYARGRKMIDSGCAVALATDLNPGSCFSGSIPLTFALACIYMKLTVAEAITAITLNGAAALGRADRIGSIEAGKQGDFVLLGTDNPHILPYYTGMNAVKLTIKGGRILHSN</sequence>
<comment type="function">
    <text evidence="1">Catalyzes the hydrolytic cleavage of the carbon-nitrogen bond in imidazolone-5-propanoate to yield N-formimidoyl-L-glutamate. It is the third step in the universal histidine degradation pathway.</text>
</comment>
<comment type="catalytic activity">
    <reaction evidence="1">
        <text>4-imidazolone-5-propanoate + H2O = N-formimidoyl-L-glutamate</text>
        <dbReference type="Rhea" id="RHEA:23660"/>
        <dbReference type="ChEBI" id="CHEBI:15377"/>
        <dbReference type="ChEBI" id="CHEBI:58928"/>
        <dbReference type="ChEBI" id="CHEBI:77893"/>
        <dbReference type="EC" id="3.5.2.7"/>
    </reaction>
</comment>
<comment type="cofactor">
    <cofactor evidence="1">
        <name>Zn(2+)</name>
        <dbReference type="ChEBI" id="CHEBI:29105"/>
    </cofactor>
    <cofactor evidence="1">
        <name>Fe(3+)</name>
        <dbReference type="ChEBI" id="CHEBI:29034"/>
    </cofactor>
    <text evidence="1">Binds 1 zinc or iron ion per subunit.</text>
</comment>
<comment type="pathway">
    <text evidence="1">Amino-acid degradation; L-histidine degradation into L-glutamate; N-formimidoyl-L-glutamate from L-histidine: step 3/3.</text>
</comment>
<comment type="subcellular location">
    <subcellularLocation>
        <location evidence="1">Cytoplasm</location>
    </subcellularLocation>
</comment>
<comment type="similarity">
    <text evidence="1">Belongs to the metallo-dependent hydrolases superfamily. HutI family.</text>
</comment>
<organism>
    <name type="scientific">Phocaeicola vulgatus (strain ATCC 8482 / DSM 1447 / JCM 5826 / CCUG 4940 / NBRC 14291 / NCTC 11154)</name>
    <name type="common">Bacteroides vulgatus</name>
    <dbReference type="NCBI Taxonomy" id="435590"/>
    <lineage>
        <taxon>Bacteria</taxon>
        <taxon>Pseudomonadati</taxon>
        <taxon>Bacteroidota</taxon>
        <taxon>Bacteroidia</taxon>
        <taxon>Bacteroidales</taxon>
        <taxon>Bacteroidaceae</taxon>
        <taxon>Phocaeicola</taxon>
    </lineage>
</organism>
<feature type="chain" id="PRO_0000306438" description="Imidazolonepropionase">
    <location>
        <begin position="1"/>
        <end position="414"/>
    </location>
</feature>
<feature type="binding site" evidence="1">
    <location>
        <position position="77"/>
    </location>
    <ligand>
        <name>Fe(3+)</name>
        <dbReference type="ChEBI" id="CHEBI:29034"/>
    </ligand>
</feature>
<feature type="binding site" evidence="1">
    <location>
        <position position="77"/>
    </location>
    <ligand>
        <name>Zn(2+)</name>
        <dbReference type="ChEBI" id="CHEBI:29105"/>
    </ligand>
</feature>
<feature type="binding site" evidence="1">
    <location>
        <position position="79"/>
    </location>
    <ligand>
        <name>Fe(3+)</name>
        <dbReference type="ChEBI" id="CHEBI:29034"/>
    </ligand>
</feature>
<feature type="binding site" evidence="1">
    <location>
        <position position="79"/>
    </location>
    <ligand>
        <name>Zn(2+)</name>
        <dbReference type="ChEBI" id="CHEBI:29105"/>
    </ligand>
</feature>
<feature type="binding site" evidence="1">
    <location>
        <position position="86"/>
    </location>
    <ligand>
        <name>4-imidazolone-5-propanoate</name>
        <dbReference type="ChEBI" id="CHEBI:77893"/>
    </ligand>
</feature>
<feature type="binding site" evidence="1">
    <location>
        <position position="149"/>
    </location>
    <ligand>
        <name>4-imidazolone-5-propanoate</name>
        <dbReference type="ChEBI" id="CHEBI:77893"/>
    </ligand>
</feature>
<feature type="binding site" evidence="1">
    <location>
        <position position="149"/>
    </location>
    <ligand>
        <name>N-formimidoyl-L-glutamate</name>
        <dbReference type="ChEBI" id="CHEBI:58928"/>
    </ligand>
</feature>
<feature type="binding site" evidence="1">
    <location>
        <position position="184"/>
    </location>
    <ligand>
        <name>4-imidazolone-5-propanoate</name>
        <dbReference type="ChEBI" id="CHEBI:77893"/>
    </ligand>
</feature>
<feature type="binding site" evidence="1">
    <location>
        <position position="249"/>
    </location>
    <ligand>
        <name>Fe(3+)</name>
        <dbReference type="ChEBI" id="CHEBI:29034"/>
    </ligand>
</feature>
<feature type="binding site" evidence="1">
    <location>
        <position position="249"/>
    </location>
    <ligand>
        <name>Zn(2+)</name>
        <dbReference type="ChEBI" id="CHEBI:29105"/>
    </ligand>
</feature>
<feature type="binding site" evidence="1">
    <location>
        <position position="252"/>
    </location>
    <ligand>
        <name>4-imidazolone-5-propanoate</name>
        <dbReference type="ChEBI" id="CHEBI:77893"/>
    </ligand>
</feature>
<feature type="binding site" evidence="1">
    <location>
        <position position="323"/>
    </location>
    <ligand>
        <name>Fe(3+)</name>
        <dbReference type="ChEBI" id="CHEBI:29034"/>
    </ligand>
</feature>
<feature type="binding site" evidence="1">
    <location>
        <position position="323"/>
    </location>
    <ligand>
        <name>Zn(2+)</name>
        <dbReference type="ChEBI" id="CHEBI:29105"/>
    </ligand>
</feature>
<feature type="binding site" evidence="1">
    <location>
        <position position="325"/>
    </location>
    <ligand>
        <name>N-formimidoyl-L-glutamate</name>
        <dbReference type="ChEBI" id="CHEBI:58928"/>
    </ligand>
</feature>
<feature type="binding site" evidence="1">
    <location>
        <position position="327"/>
    </location>
    <ligand>
        <name>N-formimidoyl-L-glutamate</name>
        <dbReference type="ChEBI" id="CHEBI:58928"/>
    </ligand>
</feature>
<feature type="binding site" evidence="1">
    <location>
        <position position="328"/>
    </location>
    <ligand>
        <name>4-imidazolone-5-propanoate</name>
        <dbReference type="ChEBI" id="CHEBI:77893"/>
    </ligand>
</feature>
<protein>
    <recommendedName>
        <fullName evidence="1">Imidazolonepropionase</fullName>
        <ecNumber evidence="1">3.5.2.7</ecNumber>
    </recommendedName>
    <alternativeName>
        <fullName evidence="1">Imidazolone-5-propionate hydrolase</fullName>
    </alternativeName>
</protein>
<evidence type="ECO:0000255" key="1">
    <source>
        <dbReference type="HAMAP-Rule" id="MF_00372"/>
    </source>
</evidence>
<name>HUTI_PHOV8</name>
<reference key="1">
    <citation type="journal article" date="2007" name="PLoS Biol.">
        <title>Evolution of symbiotic bacteria in the distal human intestine.</title>
        <authorList>
            <person name="Xu J."/>
            <person name="Mahowald M.A."/>
            <person name="Ley R.E."/>
            <person name="Lozupone C.A."/>
            <person name="Hamady M."/>
            <person name="Martens E.C."/>
            <person name="Henrissat B."/>
            <person name="Coutinho P.M."/>
            <person name="Minx P."/>
            <person name="Latreille P."/>
            <person name="Cordum H."/>
            <person name="Van Brunt A."/>
            <person name="Kim K."/>
            <person name="Fulton R.S."/>
            <person name="Fulton L.A."/>
            <person name="Clifton S.W."/>
            <person name="Wilson R.K."/>
            <person name="Knight R.D."/>
            <person name="Gordon J.I."/>
        </authorList>
    </citation>
    <scope>NUCLEOTIDE SEQUENCE [LARGE SCALE GENOMIC DNA]</scope>
    <source>
        <strain>ATCC 8482 / DSM 1447 / JCM 5826 / CCUG 4940 / NBRC 14291 / NCTC 11154</strain>
    </source>
</reference>
<proteinExistence type="inferred from homology"/>
<gene>
    <name evidence="1" type="primary">hutI</name>
    <name type="ordered locus">BVU_0336</name>
</gene>
<accession>A6KX92</accession>